<gene>
    <name type="primary">asd</name>
</gene>
<organism>
    <name type="scientific">Actinobacillus pleuropneumoniae</name>
    <name type="common">Haemophilus pleuropneumoniae</name>
    <dbReference type="NCBI Taxonomy" id="715"/>
    <lineage>
        <taxon>Bacteria</taxon>
        <taxon>Pseudomonadati</taxon>
        <taxon>Pseudomonadota</taxon>
        <taxon>Gammaproteobacteria</taxon>
        <taxon>Pasteurellales</taxon>
        <taxon>Pasteurellaceae</taxon>
        <taxon>Actinobacillus</taxon>
    </lineage>
</organism>
<keyword id="KW-0028">Amino-acid biosynthesis</keyword>
<keyword id="KW-0220">Diaminopimelate biosynthesis</keyword>
<keyword id="KW-0457">Lysine biosynthesis</keyword>
<keyword id="KW-0486">Methionine biosynthesis</keyword>
<keyword id="KW-0521">NADP</keyword>
<keyword id="KW-0560">Oxidoreductase</keyword>
<keyword id="KW-0791">Threonine biosynthesis</keyword>
<protein>
    <recommendedName>
        <fullName>Aspartate-semialdehyde dehydrogenase</fullName>
        <shortName>ASA dehydrogenase</shortName>
        <shortName>ASADH</shortName>
        <ecNumber>1.2.1.11</ecNumber>
    </recommendedName>
    <alternativeName>
        <fullName>Aspartate-beta-semialdehyde dehydrogenase</fullName>
    </alternativeName>
</protein>
<sequence>MQNVGFIGWRGMVGSVLMDRMVQENDFANINPIFFTTSQAGQKAPVFAGKDAGELKNAFDIEELKKLDIIVTCQGGDYTNEVYPKLKATGWNGYWIDAASALRMEKDAIIVLDPVNQHVISEGLKNGIKTFVGGNCTVSLMLMAIGGLFEKDLVEWVSVATYQAASGAGAKNMRELLSQMGELEASVKAELANPASSILEIERKVTAKMREDSFPTDNFGAPLAGSLIPWIDKLLESGQTKEEWKGYAETNKILGLSDNPIPVDGLCVRIGALRCHSQAFTIKLKK</sequence>
<evidence type="ECO:0000250" key="1"/>
<evidence type="ECO:0000305" key="2"/>
<feature type="chain" id="PRO_0000141358" description="Aspartate-semialdehyde dehydrogenase">
    <location>
        <begin position="1"/>
        <end position="286" status="greater than"/>
    </location>
</feature>
<feature type="active site" description="Acyl-thioester intermediate" evidence="1">
    <location>
        <position position="136"/>
    </location>
</feature>
<feature type="active site" description="Proton acceptor" evidence="1">
    <location>
        <position position="276"/>
    </location>
</feature>
<feature type="binding site" evidence="1">
    <location>
        <begin position="10"/>
        <end position="13"/>
    </location>
    <ligand>
        <name>NADP(+)</name>
        <dbReference type="ChEBI" id="CHEBI:58349"/>
    </ligand>
</feature>
<feature type="binding site" evidence="1">
    <location>
        <begin position="37"/>
        <end position="38"/>
    </location>
    <ligand>
        <name>NADP(+)</name>
        <dbReference type="ChEBI" id="CHEBI:58349"/>
    </ligand>
</feature>
<feature type="binding site" evidence="1">
    <location>
        <position position="74"/>
    </location>
    <ligand>
        <name>NADP(+)</name>
        <dbReference type="ChEBI" id="CHEBI:58349"/>
    </ligand>
</feature>
<feature type="binding site" evidence="1">
    <location>
        <position position="103"/>
    </location>
    <ligand>
        <name>phosphate</name>
        <dbReference type="ChEBI" id="CHEBI:43474"/>
    </ligand>
</feature>
<feature type="binding site" evidence="1">
    <location>
        <position position="163"/>
    </location>
    <ligand>
        <name>substrate</name>
    </ligand>
</feature>
<feature type="binding site" evidence="1">
    <location>
        <begin position="166"/>
        <end position="167"/>
    </location>
    <ligand>
        <name>NADP(+)</name>
        <dbReference type="ChEBI" id="CHEBI:58349"/>
    </ligand>
</feature>
<feature type="binding site" evidence="1">
    <location>
        <position position="194"/>
    </location>
    <ligand>
        <name>NADP(+)</name>
        <dbReference type="ChEBI" id="CHEBI:58349"/>
    </ligand>
</feature>
<feature type="binding site" evidence="1">
    <location>
        <position position="242"/>
    </location>
    <ligand>
        <name>substrate</name>
    </ligand>
</feature>
<feature type="binding site" evidence="1">
    <location>
        <position position="245"/>
    </location>
    <ligand>
        <name>phosphate</name>
        <dbReference type="ChEBI" id="CHEBI:43474"/>
    </ligand>
</feature>
<feature type="binding site" evidence="1">
    <location>
        <position position="269"/>
    </location>
    <ligand>
        <name>substrate</name>
    </ligand>
</feature>
<feature type="non-terminal residue">
    <location>
        <position position="286"/>
    </location>
</feature>
<reference key="1">
    <citation type="submission" date="1996-06" db="EMBL/GenBank/DDBJ databases">
        <authorList>
            <person name="Helie M.C."/>
            <person name="Sirois M."/>
            <person name="Ouellet C."/>
            <person name="Boissinot M."/>
        </authorList>
    </citation>
    <scope>NUCLEOTIDE SEQUENCE [GENOMIC DNA]</scope>
    <source>
        <strain>ATCC 27088 / DSM 13472 / CCM 5869 / S4074 / Serotype 1</strain>
    </source>
</reference>
<proteinExistence type="inferred from homology"/>
<accession>Q44151</accession>
<dbReference type="EC" id="1.2.1.11"/>
<dbReference type="EMBL" id="U51440">
    <property type="protein sequence ID" value="AAB02815.1"/>
    <property type="molecule type" value="Genomic_DNA"/>
</dbReference>
<dbReference type="SMR" id="Q44151"/>
<dbReference type="UniPathway" id="UPA00034">
    <property type="reaction ID" value="UER00016"/>
</dbReference>
<dbReference type="UniPathway" id="UPA00050">
    <property type="reaction ID" value="UER00463"/>
</dbReference>
<dbReference type="UniPathway" id="UPA00051">
    <property type="reaction ID" value="UER00464"/>
</dbReference>
<dbReference type="GO" id="GO:0004073">
    <property type="term" value="F:aspartate-semialdehyde dehydrogenase activity"/>
    <property type="evidence" value="ECO:0007669"/>
    <property type="project" value="UniProtKB-EC"/>
</dbReference>
<dbReference type="GO" id="GO:0051287">
    <property type="term" value="F:NAD binding"/>
    <property type="evidence" value="ECO:0007669"/>
    <property type="project" value="InterPro"/>
</dbReference>
<dbReference type="GO" id="GO:0050661">
    <property type="term" value="F:NADP binding"/>
    <property type="evidence" value="ECO:0007669"/>
    <property type="project" value="InterPro"/>
</dbReference>
<dbReference type="GO" id="GO:0046983">
    <property type="term" value="F:protein dimerization activity"/>
    <property type="evidence" value="ECO:0007669"/>
    <property type="project" value="InterPro"/>
</dbReference>
<dbReference type="GO" id="GO:0019877">
    <property type="term" value="P:diaminopimelate biosynthetic process"/>
    <property type="evidence" value="ECO:0007669"/>
    <property type="project" value="UniProtKB-KW"/>
</dbReference>
<dbReference type="GO" id="GO:0009097">
    <property type="term" value="P:isoleucine biosynthetic process"/>
    <property type="evidence" value="ECO:0007669"/>
    <property type="project" value="InterPro"/>
</dbReference>
<dbReference type="GO" id="GO:0009089">
    <property type="term" value="P:lysine biosynthetic process via diaminopimelate"/>
    <property type="evidence" value="ECO:0007669"/>
    <property type="project" value="UniProtKB-UniPathway"/>
</dbReference>
<dbReference type="GO" id="GO:0009086">
    <property type="term" value="P:methionine biosynthetic process"/>
    <property type="evidence" value="ECO:0007669"/>
    <property type="project" value="UniProtKB-KW"/>
</dbReference>
<dbReference type="GO" id="GO:0009088">
    <property type="term" value="P:threonine biosynthetic process"/>
    <property type="evidence" value="ECO:0007669"/>
    <property type="project" value="UniProtKB-UniPathway"/>
</dbReference>
<dbReference type="CDD" id="cd02314">
    <property type="entry name" value="VcASADH1_like_N"/>
    <property type="match status" value="1"/>
</dbReference>
<dbReference type="Gene3D" id="3.30.360.10">
    <property type="entry name" value="Dihydrodipicolinate Reductase, domain 2"/>
    <property type="match status" value="1"/>
</dbReference>
<dbReference type="Gene3D" id="3.40.50.720">
    <property type="entry name" value="NAD(P)-binding Rossmann-like Domain"/>
    <property type="match status" value="1"/>
</dbReference>
<dbReference type="InterPro" id="IPR000319">
    <property type="entry name" value="Asp-semialdehyde_DH_CS"/>
</dbReference>
<dbReference type="InterPro" id="IPR011534">
    <property type="entry name" value="Asp_ADH_gamma-type"/>
</dbReference>
<dbReference type="InterPro" id="IPR036291">
    <property type="entry name" value="NAD(P)-bd_dom_sf"/>
</dbReference>
<dbReference type="InterPro" id="IPR000534">
    <property type="entry name" value="Semialdehyde_DH_NAD-bd"/>
</dbReference>
<dbReference type="InterPro" id="IPR012280">
    <property type="entry name" value="Semialdhyde_DH_dimer_dom"/>
</dbReference>
<dbReference type="NCBIfam" id="TIGR01745">
    <property type="entry name" value="asd_gamma"/>
    <property type="match status" value="1"/>
</dbReference>
<dbReference type="NCBIfam" id="NF005144">
    <property type="entry name" value="PRK06598.1"/>
    <property type="match status" value="1"/>
</dbReference>
<dbReference type="PANTHER" id="PTHR46278:SF4">
    <property type="entry name" value="ASPARTATE-SEMIALDEHYDE DEHYDROGENASE"/>
    <property type="match status" value="1"/>
</dbReference>
<dbReference type="PANTHER" id="PTHR46278">
    <property type="entry name" value="DEHYDROGENASE, PUTATIVE-RELATED"/>
    <property type="match status" value="1"/>
</dbReference>
<dbReference type="Pfam" id="PF01118">
    <property type="entry name" value="Semialdhyde_dh"/>
    <property type="match status" value="1"/>
</dbReference>
<dbReference type="Pfam" id="PF02774">
    <property type="entry name" value="Semialdhyde_dhC"/>
    <property type="match status" value="1"/>
</dbReference>
<dbReference type="PIRSF" id="PIRSF000148">
    <property type="entry name" value="ASA_dh"/>
    <property type="match status" value="1"/>
</dbReference>
<dbReference type="SMART" id="SM00859">
    <property type="entry name" value="Semialdhyde_dh"/>
    <property type="match status" value="1"/>
</dbReference>
<dbReference type="SUPFAM" id="SSF55347">
    <property type="entry name" value="Glyceraldehyde-3-phosphate dehydrogenase-like, C-terminal domain"/>
    <property type="match status" value="1"/>
</dbReference>
<dbReference type="SUPFAM" id="SSF51735">
    <property type="entry name" value="NAD(P)-binding Rossmann-fold domains"/>
    <property type="match status" value="1"/>
</dbReference>
<dbReference type="PROSITE" id="PS01103">
    <property type="entry name" value="ASD"/>
    <property type="match status" value="1"/>
</dbReference>
<name>DHAS_ACTPL</name>
<comment type="function">
    <text evidence="1">Catalyzes the NADPH-dependent formation of L-aspartate-semialdehyde (L-ASA) by the reductive dephosphorylation of L-aspartyl-4-phosphate.</text>
</comment>
<comment type="catalytic activity">
    <reaction>
        <text>L-aspartate 4-semialdehyde + phosphate + NADP(+) = 4-phospho-L-aspartate + NADPH + H(+)</text>
        <dbReference type="Rhea" id="RHEA:24284"/>
        <dbReference type="ChEBI" id="CHEBI:15378"/>
        <dbReference type="ChEBI" id="CHEBI:43474"/>
        <dbReference type="ChEBI" id="CHEBI:57535"/>
        <dbReference type="ChEBI" id="CHEBI:57783"/>
        <dbReference type="ChEBI" id="CHEBI:58349"/>
        <dbReference type="ChEBI" id="CHEBI:537519"/>
        <dbReference type="EC" id="1.2.1.11"/>
    </reaction>
</comment>
<comment type="pathway">
    <text>Amino-acid biosynthesis; L-lysine biosynthesis via DAP pathway; (S)-tetrahydrodipicolinate from L-aspartate: step 2/4.</text>
</comment>
<comment type="pathway">
    <text>Amino-acid biosynthesis; L-methionine biosynthesis via de novo pathway; L-homoserine from L-aspartate: step 2/3.</text>
</comment>
<comment type="pathway">
    <text>Amino-acid biosynthesis; L-threonine biosynthesis; L-threonine from L-aspartate: step 2/5.</text>
</comment>
<comment type="subunit">
    <text evidence="1">Homodimer.</text>
</comment>
<comment type="similarity">
    <text evidence="2">Belongs to the aspartate-semialdehyde dehydrogenase family.</text>
</comment>